<reference key="1">
    <citation type="journal article" date="2004" name="J. Mol. Microbiol. Biotechnol.">
        <title>The complete genome sequence of Bacillus licheniformis DSM13, an organism with great industrial potential.</title>
        <authorList>
            <person name="Veith B."/>
            <person name="Herzberg C."/>
            <person name="Steckel S."/>
            <person name="Feesche J."/>
            <person name="Maurer K.H."/>
            <person name="Ehrenreich P."/>
            <person name="Baeumer S."/>
            <person name="Henne A."/>
            <person name="Liesegang H."/>
            <person name="Merkl R."/>
            <person name="Ehrenreich A."/>
            <person name="Gottschalk G."/>
        </authorList>
    </citation>
    <scope>NUCLEOTIDE SEQUENCE [LARGE SCALE GENOMIC DNA]</scope>
    <source>
        <strain>ATCC 14580 / DSM 13 / JCM 2505 / CCUG 7422 / NBRC 12200 / NCIMB 9375 / NCTC 10341 / NRRL NRS-1264 / Gibson 46</strain>
    </source>
</reference>
<reference key="2">
    <citation type="journal article" date="2004" name="Genome Biol.">
        <title>Complete genome sequence of the industrial bacterium Bacillus licheniformis and comparisons with closely related Bacillus species.</title>
        <authorList>
            <person name="Rey M.W."/>
            <person name="Ramaiya P."/>
            <person name="Nelson B.A."/>
            <person name="Brody-Karpin S.D."/>
            <person name="Zaretsky E.J."/>
            <person name="Tang M."/>
            <person name="Lopez de Leon A."/>
            <person name="Xiang H."/>
            <person name="Gusti V."/>
            <person name="Clausen I.G."/>
            <person name="Olsen P.B."/>
            <person name="Rasmussen M.D."/>
            <person name="Andersen J.T."/>
            <person name="Joergensen P.L."/>
            <person name="Larsen T.S."/>
            <person name="Sorokin A."/>
            <person name="Bolotin A."/>
            <person name="Lapidus A."/>
            <person name="Galleron N."/>
            <person name="Ehrlich S.D."/>
            <person name="Berka R.M."/>
        </authorList>
    </citation>
    <scope>NUCLEOTIDE SEQUENCE [LARGE SCALE GENOMIC DNA]</scope>
    <source>
        <strain>ATCC 14580 / DSM 13 / JCM 2505 / CCUG 7422 / NBRC 12200 / NCIMB 9375 / NCTC 10341 / NRRL NRS-1264 / Gibson 46</strain>
    </source>
</reference>
<evidence type="ECO:0000255" key="1">
    <source>
        <dbReference type="HAMAP-Rule" id="MF_00023"/>
    </source>
</evidence>
<proteinExistence type="inferred from homology"/>
<name>SSRP_BACLD</name>
<gene>
    <name evidence="1" type="primary">smpB</name>
    <name type="ordered locus">BLi03640</name>
    <name type="ordered locus">BL03484</name>
</gene>
<comment type="function">
    <text evidence="1">Required for rescue of stalled ribosomes mediated by trans-translation. Binds to transfer-messenger RNA (tmRNA), required for stable association of tmRNA with ribosomes. tmRNA and SmpB together mimic tRNA shape, replacing the anticodon stem-loop with SmpB. tmRNA is encoded by the ssrA gene; the 2 termini fold to resemble tRNA(Ala) and it encodes a 'tag peptide', a short internal open reading frame. During trans-translation Ala-aminoacylated tmRNA acts like a tRNA, entering the A-site of stalled ribosomes, displacing the stalled mRNA. The ribosome then switches to translate the ORF on the tmRNA; the nascent peptide is terminated with the 'tag peptide' encoded by the tmRNA and targeted for degradation. The ribosome is freed to recommence translation, which seems to be the essential function of trans-translation.</text>
</comment>
<comment type="subcellular location">
    <subcellularLocation>
        <location evidence="1">Cytoplasm</location>
    </subcellularLocation>
    <text evidence="1">The tmRNA-SmpB complex associates with stalled 70S ribosomes.</text>
</comment>
<comment type="similarity">
    <text evidence="1">Belongs to the SmpB family.</text>
</comment>
<organism>
    <name type="scientific">Bacillus licheniformis (strain ATCC 14580 / DSM 13 / JCM 2505 / CCUG 7422 / NBRC 12200 / NCIMB 9375 / NCTC 10341 / NRRL NRS-1264 / Gibson 46)</name>
    <dbReference type="NCBI Taxonomy" id="279010"/>
    <lineage>
        <taxon>Bacteria</taxon>
        <taxon>Bacillati</taxon>
        <taxon>Bacillota</taxon>
        <taxon>Bacilli</taxon>
        <taxon>Bacillales</taxon>
        <taxon>Bacillaceae</taxon>
        <taxon>Bacillus</taxon>
    </lineage>
</organism>
<protein>
    <recommendedName>
        <fullName evidence="1">SsrA-binding protein</fullName>
    </recommendedName>
    <alternativeName>
        <fullName evidence="1">Small protein B</fullName>
    </alternativeName>
</protein>
<dbReference type="EMBL" id="AE017333">
    <property type="protein sequence ID" value="AAU42461.1"/>
    <property type="molecule type" value="Genomic_DNA"/>
</dbReference>
<dbReference type="EMBL" id="CP000002">
    <property type="protein sequence ID" value="AAU25094.1"/>
    <property type="molecule type" value="Genomic_DNA"/>
</dbReference>
<dbReference type="RefSeq" id="WP_009329604.1">
    <property type="nucleotide sequence ID" value="NC_006322.1"/>
</dbReference>
<dbReference type="SMR" id="Q65EQ3"/>
<dbReference type="STRING" id="279010.BL03484"/>
<dbReference type="GeneID" id="92859779"/>
<dbReference type="KEGG" id="bld:BLi03640"/>
<dbReference type="KEGG" id="bli:BL03484"/>
<dbReference type="eggNOG" id="COG0691">
    <property type="taxonomic scope" value="Bacteria"/>
</dbReference>
<dbReference type="HOGENOM" id="CLU_108953_0_0_9"/>
<dbReference type="Proteomes" id="UP000000606">
    <property type="component" value="Chromosome"/>
</dbReference>
<dbReference type="GO" id="GO:0005829">
    <property type="term" value="C:cytosol"/>
    <property type="evidence" value="ECO:0007669"/>
    <property type="project" value="TreeGrafter"/>
</dbReference>
<dbReference type="GO" id="GO:0003723">
    <property type="term" value="F:RNA binding"/>
    <property type="evidence" value="ECO:0007669"/>
    <property type="project" value="UniProtKB-UniRule"/>
</dbReference>
<dbReference type="GO" id="GO:0070929">
    <property type="term" value="P:trans-translation"/>
    <property type="evidence" value="ECO:0007669"/>
    <property type="project" value="UniProtKB-UniRule"/>
</dbReference>
<dbReference type="CDD" id="cd09294">
    <property type="entry name" value="SmpB"/>
    <property type="match status" value="1"/>
</dbReference>
<dbReference type="Gene3D" id="2.40.280.10">
    <property type="match status" value="1"/>
</dbReference>
<dbReference type="HAMAP" id="MF_00023">
    <property type="entry name" value="SmpB"/>
    <property type="match status" value="1"/>
</dbReference>
<dbReference type="InterPro" id="IPR023620">
    <property type="entry name" value="SmpB"/>
</dbReference>
<dbReference type="InterPro" id="IPR000037">
    <property type="entry name" value="SsrA-bd_prot"/>
</dbReference>
<dbReference type="InterPro" id="IPR020081">
    <property type="entry name" value="SsrA-bd_prot_CS"/>
</dbReference>
<dbReference type="NCBIfam" id="NF003843">
    <property type="entry name" value="PRK05422.1"/>
    <property type="match status" value="1"/>
</dbReference>
<dbReference type="NCBIfam" id="TIGR00086">
    <property type="entry name" value="smpB"/>
    <property type="match status" value="1"/>
</dbReference>
<dbReference type="PANTHER" id="PTHR30308:SF2">
    <property type="entry name" value="SSRA-BINDING PROTEIN"/>
    <property type="match status" value="1"/>
</dbReference>
<dbReference type="PANTHER" id="PTHR30308">
    <property type="entry name" value="TMRNA-BINDING COMPONENT OF TRANS-TRANSLATION TAGGING COMPLEX"/>
    <property type="match status" value="1"/>
</dbReference>
<dbReference type="Pfam" id="PF01668">
    <property type="entry name" value="SmpB"/>
    <property type="match status" value="1"/>
</dbReference>
<dbReference type="SUPFAM" id="SSF74982">
    <property type="entry name" value="Small protein B (SmpB)"/>
    <property type="match status" value="1"/>
</dbReference>
<dbReference type="PROSITE" id="PS01317">
    <property type="entry name" value="SSRP"/>
    <property type="match status" value="1"/>
</dbReference>
<feature type="chain" id="PRO_0000102904" description="SsrA-binding protein">
    <location>
        <begin position="1"/>
        <end position="157"/>
    </location>
</feature>
<sequence>MPKGEGKVVSQNKKANHDYFIEETYETGIVLQGTEIKSIRAGRVNLKDAFAKIERGEVFLHNMHISPYEQGNRYNHDPLRTRKLLMHRKQINKLIGLTKEQGYSLVPLKIYLKNGFAKVLLGLGKGKKKFDKREDLKRKDAKREIERAFRDRQKGLI</sequence>
<accession>Q65EQ3</accession>
<accession>Q62Q66</accession>
<keyword id="KW-0963">Cytoplasm</keyword>
<keyword id="KW-1185">Reference proteome</keyword>
<keyword id="KW-0694">RNA-binding</keyword>